<accession>O94626</accession>
<name>ORN_SCHPO</name>
<evidence type="ECO:0000250" key="1"/>
<evidence type="ECO:0000255" key="2"/>
<evidence type="ECO:0000269" key="3">
    <source>
    </source>
</evidence>
<evidence type="ECO:0000305" key="4"/>
<keyword id="KW-0963">Cytoplasm</keyword>
<keyword id="KW-0269">Exonuclease</keyword>
<keyword id="KW-0378">Hydrolase</keyword>
<keyword id="KW-0540">Nuclease</keyword>
<keyword id="KW-0539">Nucleus</keyword>
<keyword id="KW-1185">Reference proteome</keyword>
<gene>
    <name type="primary">rex2</name>
    <name type="ORF">SPBC1347.07</name>
</gene>
<feature type="chain" id="PRO_0000111093" description="Probable oligoribonuclease">
    <location>
        <begin position="1"/>
        <end position="252"/>
    </location>
</feature>
<feature type="domain" description="Exonuclease">
    <location>
        <begin position="81"/>
        <end position="241"/>
    </location>
</feature>
<feature type="active site" evidence="2">
    <location>
        <position position="202"/>
    </location>
</feature>
<protein>
    <recommendedName>
        <fullName>Probable oligoribonuclease</fullName>
        <ecNumber>3.1.15.-</ecNumber>
    </recommendedName>
</protein>
<proteinExistence type="inferred from homology"/>
<reference key="1">
    <citation type="journal article" date="2002" name="Nature">
        <title>The genome sequence of Schizosaccharomyces pombe.</title>
        <authorList>
            <person name="Wood V."/>
            <person name="Gwilliam R."/>
            <person name="Rajandream M.A."/>
            <person name="Lyne M.H."/>
            <person name="Lyne R."/>
            <person name="Stewart A."/>
            <person name="Sgouros J.G."/>
            <person name="Peat N."/>
            <person name="Hayles J."/>
            <person name="Baker S.G."/>
            <person name="Basham D."/>
            <person name="Bowman S."/>
            <person name="Brooks K."/>
            <person name="Brown D."/>
            <person name="Brown S."/>
            <person name="Chillingworth T."/>
            <person name="Churcher C.M."/>
            <person name="Collins M."/>
            <person name="Connor R."/>
            <person name="Cronin A."/>
            <person name="Davis P."/>
            <person name="Feltwell T."/>
            <person name="Fraser A."/>
            <person name="Gentles S."/>
            <person name="Goble A."/>
            <person name="Hamlin N."/>
            <person name="Harris D.E."/>
            <person name="Hidalgo J."/>
            <person name="Hodgson G."/>
            <person name="Holroyd S."/>
            <person name="Hornsby T."/>
            <person name="Howarth S."/>
            <person name="Huckle E.J."/>
            <person name="Hunt S."/>
            <person name="Jagels K."/>
            <person name="James K.D."/>
            <person name="Jones L."/>
            <person name="Jones M."/>
            <person name="Leather S."/>
            <person name="McDonald S."/>
            <person name="McLean J."/>
            <person name="Mooney P."/>
            <person name="Moule S."/>
            <person name="Mungall K.L."/>
            <person name="Murphy L.D."/>
            <person name="Niblett D."/>
            <person name="Odell C."/>
            <person name="Oliver K."/>
            <person name="O'Neil S."/>
            <person name="Pearson D."/>
            <person name="Quail M.A."/>
            <person name="Rabbinowitsch E."/>
            <person name="Rutherford K.M."/>
            <person name="Rutter S."/>
            <person name="Saunders D."/>
            <person name="Seeger K."/>
            <person name="Sharp S."/>
            <person name="Skelton J."/>
            <person name="Simmonds M.N."/>
            <person name="Squares R."/>
            <person name="Squares S."/>
            <person name="Stevens K."/>
            <person name="Taylor K."/>
            <person name="Taylor R.G."/>
            <person name="Tivey A."/>
            <person name="Walsh S.V."/>
            <person name="Warren T."/>
            <person name="Whitehead S."/>
            <person name="Woodward J.R."/>
            <person name="Volckaert G."/>
            <person name="Aert R."/>
            <person name="Robben J."/>
            <person name="Grymonprez B."/>
            <person name="Weltjens I."/>
            <person name="Vanstreels E."/>
            <person name="Rieger M."/>
            <person name="Schaefer M."/>
            <person name="Mueller-Auer S."/>
            <person name="Gabel C."/>
            <person name="Fuchs M."/>
            <person name="Duesterhoeft A."/>
            <person name="Fritzc C."/>
            <person name="Holzer E."/>
            <person name="Moestl D."/>
            <person name="Hilbert H."/>
            <person name="Borzym K."/>
            <person name="Langer I."/>
            <person name="Beck A."/>
            <person name="Lehrach H."/>
            <person name="Reinhardt R."/>
            <person name="Pohl T.M."/>
            <person name="Eger P."/>
            <person name="Zimmermann W."/>
            <person name="Wedler H."/>
            <person name="Wambutt R."/>
            <person name="Purnelle B."/>
            <person name="Goffeau A."/>
            <person name="Cadieu E."/>
            <person name="Dreano S."/>
            <person name="Gloux S."/>
            <person name="Lelaure V."/>
            <person name="Mottier S."/>
            <person name="Galibert F."/>
            <person name="Aves S.J."/>
            <person name="Xiang Z."/>
            <person name="Hunt C."/>
            <person name="Moore K."/>
            <person name="Hurst S.M."/>
            <person name="Lucas M."/>
            <person name="Rochet M."/>
            <person name="Gaillardin C."/>
            <person name="Tallada V.A."/>
            <person name="Garzon A."/>
            <person name="Thode G."/>
            <person name="Daga R.R."/>
            <person name="Cruzado L."/>
            <person name="Jimenez J."/>
            <person name="Sanchez M."/>
            <person name="del Rey F."/>
            <person name="Benito J."/>
            <person name="Dominguez A."/>
            <person name="Revuelta J.L."/>
            <person name="Moreno S."/>
            <person name="Armstrong J."/>
            <person name="Forsburg S.L."/>
            <person name="Cerutti L."/>
            <person name="Lowe T."/>
            <person name="McCombie W.R."/>
            <person name="Paulsen I."/>
            <person name="Potashkin J."/>
            <person name="Shpakovski G.V."/>
            <person name="Ussery D."/>
            <person name="Barrell B.G."/>
            <person name="Nurse P."/>
        </authorList>
    </citation>
    <scope>NUCLEOTIDE SEQUENCE [LARGE SCALE GENOMIC DNA]</scope>
    <source>
        <strain>972 / ATCC 24843</strain>
    </source>
</reference>
<reference key="2">
    <citation type="journal article" date="2011" name="Science">
        <title>Comparative functional genomics of the fission yeasts.</title>
        <authorList>
            <person name="Rhind N."/>
            <person name="Chen Z."/>
            <person name="Yassour M."/>
            <person name="Thompson D.A."/>
            <person name="Haas B.J."/>
            <person name="Habib N."/>
            <person name="Wapinski I."/>
            <person name="Roy S."/>
            <person name="Lin M.F."/>
            <person name="Heiman D.I."/>
            <person name="Young S.K."/>
            <person name="Furuya K."/>
            <person name="Guo Y."/>
            <person name="Pidoux A."/>
            <person name="Chen H.M."/>
            <person name="Robbertse B."/>
            <person name="Goldberg J.M."/>
            <person name="Aoki K."/>
            <person name="Bayne E.H."/>
            <person name="Berlin A.M."/>
            <person name="Desjardins C.A."/>
            <person name="Dobbs E."/>
            <person name="Dukaj L."/>
            <person name="Fan L."/>
            <person name="FitzGerald M.G."/>
            <person name="French C."/>
            <person name="Gujja S."/>
            <person name="Hansen K."/>
            <person name="Keifenheim D."/>
            <person name="Levin J.Z."/>
            <person name="Mosher R.A."/>
            <person name="Mueller C.A."/>
            <person name="Pfiffner J."/>
            <person name="Priest M."/>
            <person name="Russ C."/>
            <person name="Smialowska A."/>
            <person name="Swoboda P."/>
            <person name="Sykes S.M."/>
            <person name="Vaughn M."/>
            <person name="Vengrova S."/>
            <person name="Yoder R."/>
            <person name="Zeng Q."/>
            <person name="Allshire R."/>
            <person name="Baulcombe D."/>
            <person name="Birren B.W."/>
            <person name="Brown W."/>
            <person name="Ekwall K."/>
            <person name="Kellis M."/>
            <person name="Leatherwood J."/>
            <person name="Levin H."/>
            <person name="Margalit H."/>
            <person name="Martienssen R."/>
            <person name="Nieduszynski C.A."/>
            <person name="Spatafora J.W."/>
            <person name="Friedman N."/>
            <person name="Dalgaard J.Z."/>
            <person name="Baumann P."/>
            <person name="Niki H."/>
            <person name="Regev A."/>
            <person name="Nusbaum C."/>
        </authorList>
    </citation>
    <scope>REVISION OF GENE MODEL</scope>
</reference>
<reference key="3">
    <citation type="journal article" date="2006" name="Nat. Biotechnol.">
        <title>ORFeome cloning and global analysis of protein localization in the fission yeast Schizosaccharomyces pombe.</title>
        <authorList>
            <person name="Matsuyama A."/>
            <person name="Arai R."/>
            <person name="Yashiroda Y."/>
            <person name="Shirai A."/>
            <person name="Kamata A."/>
            <person name="Sekido S."/>
            <person name="Kobayashi Y."/>
            <person name="Hashimoto A."/>
            <person name="Hamamoto M."/>
            <person name="Hiraoka Y."/>
            <person name="Horinouchi S."/>
            <person name="Yoshida M."/>
        </authorList>
    </citation>
    <scope>SUBCELLULAR LOCATION [LARGE SCALE ANALYSIS]</scope>
</reference>
<sequence length="252" mass="29286">MQGAFLNNRIILQSYHIKKRLYSKRTSSLHSRFLQPTYRKNICQISKPIFQQDLSTNTNFISKLKSPFSNLKMSNLKQPLVWIDCEMTGLEVGKHVLMEVAAIITDGNLRPVEEKFDAVIKLDEKQLSEMNDWCIEQHGKSGLTERCRQSNLTVKDVENQLLAYIKKYIPKKREALIAGNSVHADVRFLSVEMPKIIEHLHYRIIDVSTIKELAKRWCPDIPAYDKKGDHRALSDILESIGELQHYRSYWLS</sequence>
<organism>
    <name type="scientific">Schizosaccharomyces pombe (strain 972 / ATCC 24843)</name>
    <name type="common">Fission yeast</name>
    <dbReference type="NCBI Taxonomy" id="284812"/>
    <lineage>
        <taxon>Eukaryota</taxon>
        <taxon>Fungi</taxon>
        <taxon>Dikarya</taxon>
        <taxon>Ascomycota</taxon>
        <taxon>Taphrinomycotina</taxon>
        <taxon>Schizosaccharomycetes</taxon>
        <taxon>Schizosaccharomycetales</taxon>
        <taxon>Schizosaccharomycetaceae</taxon>
        <taxon>Schizosaccharomyces</taxon>
    </lineage>
</organism>
<comment type="function">
    <text evidence="1">3'-to-5' exoribonuclease specific for small oligoribonucleotides.</text>
</comment>
<comment type="subcellular location">
    <subcellularLocation>
        <location evidence="3">Cytoplasm</location>
    </subcellularLocation>
    <subcellularLocation>
        <location evidence="3">Nucleus</location>
    </subcellularLocation>
</comment>
<comment type="similarity">
    <text evidence="4">Belongs to the oligoribonuclease family.</text>
</comment>
<dbReference type="EC" id="3.1.15.-"/>
<dbReference type="EMBL" id="CU329671">
    <property type="protein sequence ID" value="CAB37438.2"/>
    <property type="molecule type" value="Genomic_DNA"/>
</dbReference>
<dbReference type="PIR" id="T39395">
    <property type="entry name" value="T39395"/>
</dbReference>
<dbReference type="RefSeq" id="NP_596699.2">
    <property type="nucleotide sequence ID" value="NM_001022623.2"/>
</dbReference>
<dbReference type="SMR" id="O94626"/>
<dbReference type="BioGRID" id="276401">
    <property type="interactions" value="8"/>
</dbReference>
<dbReference type="FunCoup" id="O94626">
    <property type="interactions" value="615"/>
</dbReference>
<dbReference type="STRING" id="284812.O94626"/>
<dbReference type="iPTMnet" id="O94626"/>
<dbReference type="PaxDb" id="4896-SPBC1347.07.1"/>
<dbReference type="EnsemblFungi" id="SPBC1347.07.1">
    <property type="protein sequence ID" value="SPBC1347.07.1:pep"/>
    <property type="gene ID" value="SPBC1347.07"/>
</dbReference>
<dbReference type="GeneID" id="2539853"/>
<dbReference type="KEGG" id="spo:2539853"/>
<dbReference type="PomBase" id="SPBC1347.07">
    <property type="gene designation" value="rex2"/>
</dbReference>
<dbReference type="VEuPathDB" id="FungiDB:SPBC1347.07"/>
<dbReference type="eggNOG" id="KOG3242">
    <property type="taxonomic scope" value="Eukaryota"/>
</dbReference>
<dbReference type="HOGENOM" id="CLU_064761_0_1_1"/>
<dbReference type="InParanoid" id="O94626"/>
<dbReference type="OMA" id="AFFHYRN"/>
<dbReference type="PRO" id="PR:O94626"/>
<dbReference type="Proteomes" id="UP000002485">
    <property type="component" value="Chromosome II"/>
</dbReference>
<dbReference type="GO" id="GO:0005829">
    <property type="term" value="C:cytosol"/>
    <property type="evidence" value="ECO:0007005"/>
    <property type="project" value="PomBase"/>
</dbReference>
<dbReference type="GO" id="GO:0005739">
    <property type="term" value="C:mitochondrion"/>
    <property type="evidence" value="ECO:0000318"/>
    <property type="project" value="GO_Central"/>
</dbReference>
<dbReference type="GO" id="GO:0005634">
    <property type="term" value="C:nucleus"/>
    <property type="evidence" value="ECO:0007005"/>
    <property type="project" value="PomBase"/>
</dbReference>
<dbReference type="GO" id="GO:0000175">
    <property type="term" value="F:3'-5'-RNA exonuclease activity"/>
    <property type="evidence" value="ECO:0000318"/>
    <property type="project" value="GO_Central"/>
</dbReference>
<dbReference type="GO" id="GO:0003676">
    <property type="term" value="F:nucleic acid binding"/>
    <property type="evidence" value="ECO:0007669"/>
    <property type="project" value="InterPro"/>
</dbReference>
<dbReference type="GO" id="GO:0006364">
    <property type="term" value="P:rRNA processing"/>
    <property type="evidence" value="ECO:0000250"/>
    <property type="project" value="PomBase"/>
</dbReference>
<dbReference type="CDD" id="cd06135">
    <property type="entry name" value="Orn"/>
    <property type="match status" value="1"/>
</dbReference>
<dbReference type="FunFam" id="3.30.420.10:FF:000003">
    <property type="entry name" value="Oligoribonuclease"/>
    <property type="match status" value="1"/>
</dbReference>
<dbReference type="Gene3D" id="3.30.420.10">
    <property type="entry name" value="Ribonuclease H-like superfamily/Ribonuclease H"/>
    <property type="match status" value="1"/>
</dbReference>
<dbReference type="InterPro" id="IPR013520">
    <property type="entry name" value="Exonuclease_RNaseT/DNA_pol3"/>
</dbReference>
<dbReference type="InterPro" id="IPR022894">
    <property type="entry name" value="Oligoribonuclease"/>
</dbReference>
<dbReference type="InterPro" id="IPR012337">
    <property type="entry name" value="RNaseH-like_sf"/>
</dbReference>
<dbReference type="InterPro" id="IPR036397">
    <property type="entry name" value="RNaseH_sf"/>
</dbReference>
<dbReference type="NCBIfam" id="NF003765">
    <property type="entry name" value="PRK05359.1"/>
    <property type="match status" value="1"/>
</dbReference>
<dbReference type="PANTHER" id="PTHR11046">
    <property type="entry name" value="OLIGORIBONUCLEASE, MITOCHONDRIAL"/>
    <property type="match status" value="1"/>
</dbReference>
<dbReference type="PANTHER" id="PTHR11046:SF0">
    <property type="entry name" value="OLIGORIBONUCLEASE, MITOCHONDRIAL"/>
    <property type="match status" value="1"/>
</dbReference>
<dbReference type="Pfam" id="PF00929">
    <property type="entry name" value="RNase_T"/>
    <property type="match status" value="1"/>
</dbReference>
<dbReference type="SMART" id="SM00479">
    <property type="entry name" value="EXOIII"/>
    <property type="match status" value="1"/>
</dbReference>
<dbReference type="SUPFAM" id="SSF53098">
    <property type="entry name" value="Ribonuclease H-like"/>
    <property type="match status" value="1"/>
</dbReference>